<dbReference type="EMBL" id="AB065545">
    <property type="protein sequence ID" value="BAC05790.1"/>
    <property type="molecule type" value="Genomic_DNA"/>
</dbReference>
<dbReference type="EMBL" id="BK004506">
    <property type="protein sequence ID" value="DAA04904.1"/>
    <property type="molecule type" value="Genomic_DNA"/>
</dbReference>
<dbReference type="CCDS" id="CCDS31549.1"/>
<dbReference type="RefSeq" id="NP_001005469.1">
    <property type="nucleotide sequence ID" value="NM_001005469.2"/>
</dbReference>
<dbReference type="SMR" id="Q8NH48"/>
<dbReference type="BioGRID" id="137615">
    <property type="interactions" value="1"/>
</dbReference>
<dbReference type="FunCoup" id="Q8NH48">
    <property type="interactions" value="417"/>
</dbReference>
<dbReference type="IntAct" id="Q8NH48">
    <property type="interactions" value="1"/>
</dbReference>
<dbReference type="STRING" id="9606.ENSP00000493217"/>
<dbReference type="GlyCosmos" id="Q8NH48">
    <property type="glycosylation" value="3 sites, No reported glycans"/>
</dbReference>
<dbReference type="GlyGen" id="Q8NH48">
    <property type="glycosylation" value="3 sites"/>
</dbReference>
<dbReference type="iPTMnet" id="Q8NH48"/>
<dbReference type="PhosphoSitePlus" id="Q8NH48"/>
<dbReference type="BioMuta" id="OR5B3"/>
<dbReference type="DMDM" id="38372807"/>
<dbReference type="PaxDb" id="9606-ENSP00000308270"/>
<dbReference type="Antibodypedia" id="58768">
    <property type="antibodies" value="37 antibodies from 15 providers"/>
</dbReference>
<dbReference type="DNASU" id="441608"/>
<dbReference type="Ensembl" id="ENST00000641865.1">
    <property type="protein sequence ID" value="ENSP00000493217.1"/>
    <property type="gene ID" value="ENSG00000172769.4"/>
</dbReference>
<dbReference type="GeneID" id="441608"/>
<dbReference type="KEGG" id="hsa:441608"/>
<dbReference type="MANE-Select" id="ENST00000641865.1">
    <property type="protein sequence ID" value="ENSP00000493217.1"/>
    <property type="RefSeq nucleotide sequence ID" value="NM_001005469.2"/>
    <property type="RefSeq protein sequence ID" value="NP_001005469.1"/>
</dbReference>
<dbReference type="UCSC" id="uc010rkf.3">
    <property type="organism name" value="human"/>
</dbReference>
<dbReference type="AGR" id="HGNC:8324"/>
<dbReference type="CTD" id="441608"/>
<dbReference type="DisGeNET" id="441608"/>
<dbReference type="GeneCards" id="OR5B3"/>
<dbReference type="HGNC" id="HGNC:8324">
    <property type="gene designation" value="OR5B3"/>
</dbReference>
<dbReference type="HPA" id="ENSG00000172769">
    <property type="expression patterns" value="Not detected"/>
</dbReference>
<dbReference type="neXtProt" id="NX_Q8NH48"/>
<dbReference type="PharmGKB" id="PA32491"/>
<dbReference type="VEuPathDB" id="HostDB:ENSG00000172769"/>
<dbReference type="eggNOG" id="ENOG502QVH7">
    <property type="taxonomic scope" value="Eukaryota"/>
</dbReference>
<dbReference type="GeneTree" id="ENSGT01120000271832"/>
<dbReference type="HOGENOM" id="CLU_012526_1_0_1"/>
<dbReference type="InParanoid" id="Q8NH48"/>
<dbReference type="OMA" id="QMYIFVA"/>
<dbReference type="OrthoDB" id="9442037at2759"/>
<dbReference type="PAN-GO" id="Q8NH48">
    <property type="GO annotations" value="4 GO annotations based on evolutionary models"/>
</dbReference>
<dbReference type="PhylomeDB" id="Q8NH48"/>
<dbReference type="TreeFam" id="TF352753"/>
<dbReference type="PathwayCommons" id="Q8NH48"/>
<dbReference type="Reactome" id="R-HSA-9752946">
    <property type="pathway name" value="Expression and translocation of olfactory receptors"/>
</dbReference>
<dbReference type="SignaLink" id="Q8NH48"/>
<dbReference type="BioGRID-ORCS" id="441608">
    <property type="hits" value="16 hits in 679 CRISPR screens"/>
</dbReference>
<dbReference type="GeneWiki" id="OR5B3"/>
<dbReference type="GenomeRNAi" id="441608"/>
<dbReference type="Pharos" id="Q8NH48">
    <property type="development level" value="Tdark"/>
</dbReference>
<dbReference type="PRO" id="PR:Q8NH48"/>
<dbReference type="Proteomes" id="UP000005640">
    <property type="component" value="Chromosome 11"/>
</dbReference>
<dbReference type="RNAct" id="Q8NH48">
    <property type="molecule type" value="protein"/>
</dbReference>
<dbReference type="ExpressionAtlas" id="Q8NH48">
    <property type="expression patterns" value="baseline and differential"/>
</dbReference>
<dbReference type="GO" id="GO:0005886">
    <property type="term" value="C:plasma membrane"/>
    <property type="evidence" value="ECO:0007669"/>
    <property type="project" value="UniProtKB-SubCell"/>
</dbReference>
<dbReference type="GO" id="GO:0004930">
    <property type="term" value="F:G protein-coupled receptor activity"/>
    <property type="evidence" value="ECO:0007669"/>
    <property type="project" value="UniProtKB-KW"/>
</dbReference>
<dbReference type="GO" id="GO:0005549">
    <property type="term" value="F:odorant binding"/>
    <property type="evidence" value="ECO:0000318"/>
    <property type="project" value="GO_Central"/>
</dbReference>
<dbReference type="GO" id="GO:0004984">
    <property type="term" value="F:olfactory receptor activity"/>
    <property type="evidence" value="ECO:0000318"/>
    <property type="project" value="GO_Central"/>
</dbReference>
<dbReference type="GO" id="GO:0007186">
    <property type="term" value="P:G protein-coupled receptor signaling pathway"/>
    <property type="evidence" value="ECO:0000318"/>
    <property type="project" value="GO_Central"/>
</dbReference>
<dbReference type="GO" id="GO:0007608">
    <property type="term" value="P:sensory perception of smell"/>
    <property type="evidence" value="ECO:0000318"/>
    <property type="project" value="GO_Central"/>
</dbReference>
<dbReference type="CDD" id="cd15407">
    <property type="entry name" value="7tmA_OR5B-like"/>
    <property type="match status" value="1"/>
</dbReference>
<dbReference type="FunFam" id="1.10.1220.70:FF:000001">
    <property type="entry name" value="Olfactory receptor"/>
    <property type="match status" value="1"/>
</dbReference>
<dbReference type="FunFam" id="1.20.1070.10:FF:000003">
    <property type="entry name" value="Olfactory receptor"/>
    <property type="match status" value="1"/>
</dbReference>
<dbReference type="Gene3D" id="1.20.1070.10">
    <property type="entry name" value="Rhodopsin 7-helix transmembrane proteins"/>
    <property type="match status" value="1"/>
</dbReference>
<dbReference type="InterPro" id="IPR000276">
    <property type="entry name" value="GPCR_Rhodpsn"/>
</dbReference>
<dbReference type="InterPro" id="IPR017452">
    <property type="entry name" value="GPCR_Rhodpsn_7TM"/>
</dbReference>
<dbReference type="InterPro" id="IPR000725">
    <property type="entry name" value="Olfact_rcpt"/>
</dbReference>
<dbReference type="PANTHER" id="PTHR48018">
    <property type="entry name" value="OLFACTORY RECEPTOR"/>
    <property type="match status" value="1"/>
</dbReference>
<dbReference type="Pfam" id="PF13853">
    <property type="entry name" value="7tm_4"/>
    <property type="match status" value="1"/>
</dbReference>
<dbReference type="PRINTS" id="PR00237">
    <property type="entry name" value="GPCRRHODOPSN"/>
</dbReference>
<dbReference type="PRINTS" id="PR00245">
    <property type="entry name" value="OLFACTORYR"/>
</dbReference>
<dbReference type="SUPFAM" id="SSF81321">
    <property type="entry name" value="Family A G protein-coupled receptor-like"/>
    <property type="match status" value="1"/>
</dbReference>
<dbReference type="PROSITE" id="PS00237">
    <property type="entry name" value="G_PROTEIN_RECEP_F1_1"/>
    <property type="match status" value="1"/>
</dbReference>
<dbReference type="PROSITE" id="PS50262">
    <property type="entry name" value="G_PROTEIN_RECEP_F1_2"/>
    <property type="match status" value="1"/>
</dbReference>
<organism>
    <name type="scientific">Homo sapiens</name>
    <name type="common">Human</name>
    <dbReference type="NCBI Taxonomy" id="9606"/>
    <lineage>
        <taxon>Eukaryota</taxon>
        <taxon>Metazoa</taxon>
        <taxon>Chordata</taxon>
        <taxon>Craniata</taxon>
        <taxon>Vertebrata</taxon>
        <taxon>Euteleostomi</taxon>
        <taxon>Mammalia</taxon>
        <taxon>Eutheria</taxon>
        <taxon>Euarchontoglires</taxon>
        <taxon>Primates</taxon>
        <taxon>Haplorrhini</taxon>
        <taxon>Catarrhini</taxon>
        <taxon>Hominidae</taxon>
        <taxon>Homo</taxon>
    </lineage>
</organism>
<comment type="function">
    <text evidence="3">Odorant receptor.</text>
</comment>
<comment type="subcellular location">
    <subcellularLocation>
        <location>Cell membrane</location>
        <topology>Multi-pass membrane protein</topology>
    </subcellularLocation>
</comment>
<comment type="similarity">
    <text evidence="2">Belongs to the G-protein coupled receptor 1 family.</text>
</comment>
<comment type="online information" name="Human Olfactory Receptor Data Exploratorium (HORDE)">
    <link uri="http://genome.weizmann.ac.il/horde/card/index/symbol:OR5B3"/>
</comment>
<feature type="chain" id="PRO_0000150586" description="Olfactory receptor 5B3">
    <location>
        <begin position="1"/>
        <end position="314"/>
    </location>
</feature>
<feature type="topological domain" description="Extracellular" evidence="1">
    <location>
        <begin position="1"/>
        <end position="23"/>
    </location>
</feature>
<feature type="transmembrane region" description="Helical; Name=1" evidence="1">
    <location>
        <begin position="24"/>
        <end position="44"/>
    </location>
</feature>
<feature type="topological domain" description="Cytoplasmic" evidence="1">
    <location>
        <begin position="45"/>
        <end position="52"/>
    </location>
</feature>
<feature type="transmembrane region" description="Helical; Name=2" evidence="1">
    <location>
        <begin position="53"/>
        <end position="73"/>
    </location>
</feature>
<feature type="topological domain" description="Extracellular" evidence="1">
    <location>
        <begin position="74"/>
        <end position="97"/>
    </location>
</feature>
<feature type="transmembrane region" description="Helical; Name=3" evidence="1">
    <location>
        <begin position="98"/>
        <end position="118"/>
    </location>
</feature>
<feature type="topological domain" description="Cytoplasmic" evidence="1">
    <location>
        <begin position="119"/>
        <end position="131"/>
    </location>
</feature>
<feature type="transmembrane region" description="Helical; Name=4" evidence="1">
    <location>
        <begin position="132"/>
        <end position="152"/>
    </location>
</feature>
<feature type="topological domain" description="Extracellular" evidence="1">
    <location>
        <begin position="153"/>
        <end position="194"/>
    </location>
</feature>
<feature type="transmembrane region" description="Helical; Name=5" evidence="1">
    <location>
        <begin position="195"/>
        <end position="215"/>
    </location>
</feature>
<feature type="topological domain" description="Cytoplasmic" evidence="1">
    <location>
        <begin position="216"/>
        <end position="235"/>
    </location>
</feature>
<feature type="transmembrane region" description="Helical; Name=6" evidence="1">
    <location>
        <begin position="236"/>
        <end position="256"/>
    </location>
</feature>
<feature type="topological domain" description="Extracellular" evidence="1">
    <location>
        <begin position="257"/>
        <end position="269"/>
    </location>
</feature>
<feature type="transmembrane region" description="Helical; Name=7" evidence="1">
    <location>
        <begin position="270"/>
        <end position="290"/>
    </location>
</feature>
<feature type="topological domain" description="Cytoplasmic" evidence="1">
    <location>
        <begin position="291"/>
        <end position="314"/>
    </location>
</feature>
<feature type="glycosylation site" description="N-linked (GlcNAc...) asparagine" evidence="1">
    <location>
        <position position="3"/>
    </location>
</feature>
<feature type="glycosylation site" description="N-linked (GlcNAc...) asparagine" evidence="1">
    <location>
        <position position="17"/>
    </location>
</feature>
<feature type="glycosylation site" description="N-linked (GlcNAc...) asparagine" evidence="1">
    <location>
        <position position="153"/>
    </location>
</feature>
<feature type="disulfide bond" evidence="2">
    <location>
        <begin position="95"/>
        <end position="187"/>
    </location>
</feature>
<feature type="sequence variant" id="VAR_053183" description="In dbSNP:rs17152661.">
    <original>P</original>
    <variation>L</variation>
    <location>
        <position position="30"/>
    </location>
</feature>
<feature type="sequence variant" id="VAR_053184" description="In dbSNP:rs17152659.">
    <original>I</original>
    <variation>F</variation>
    <location>
        <position position="35"/>
    </location>
</feature>
<feature type="sequence variant" id="VAR_053185" description="In dbSNP:rs11229413.">
    <original>W</original>
    <variation>R</variation>
    <location>
        <position position="49"/>
    </location>
</feature>
<feature type="sequence variant" id="VAR_053186" description="In dbSNP:rs12280114.">
    <original>N</original>
    <variation>S</variation>
    <location>
        <position position="170"/>
    </location>
</feature>
<feature type="sequence variant" id="VAR_053187" description="In dbSNP:rs11229411.">
    <original>A</original>
    <variation>T</variation>
    <location>
        <position position="181"/>
    </location>
</feature>
<feature type="sequence variant" id="VAR_053188" description="In dbSNP:rs11229410.">
    <original>I</original>
    <variation>V</variation>
    <location>
        <position position="198"/>
    </location>
</feature>
<feature type="sequence variant" id="VAR_053189" description="In dbSNP:rs11229409.">
    <original>G</original>
    <variation>A</variation>
    <location>
        <position position="247"/>
    </location>
</feature>
<feature type="sequence variant" id="VAR_053190" description="In dbSNP:rs12279895.">
    <original>K</original>
    <variation>R</variation>
    <location>
        <position position="296"/>
    </location>
</feature>
<protein>
    <recommendedName>
        <fullName>Olfactory receptor 5B3</fullName>
    </recommendedName>
    <alternativeName>
        <fullName>Olfactory receptor 5B13</fullName>
    </alternativeName>
    <alternativeName>
        <fullName>Olfactory receptor OR11-239</fullName>
    </alternativeName>
</protein>
<name>OR5B3_HUMAN</name>
<gene>
    <name type="primary">OR5B3</name>
    <name type="synonym">OR5B13</name>
</gene>
<reference key="1">
    <citation type="submission" date="2001-07" db="EMBL/GenBank/DDBJ databases">
        <title>Genome-wide discovery and analysis of human seven transmembrane helix receptor genes.</title>
        <authorList>
            <person name="Suwa M."/>
            <person name="Sato T."/>
            <person name="Okouchi I."/>
            <person name="Arita M."/>
            <person name="Futami K."/>
            <person name="Matsumoto S."/>
            <person name="Tsutsumi S."/>
            <person name="Aburatani H."/>
            <person name="Asai K."/>
            <person name="Akiyama Y."/>
        </authorList>
    </citation>
    <scope>NUCLEOTIDE SEQUENCE [GENOMIC DNA]</scope>
</reference>
<reference key="2">
    <citation type="journal article" date="2004" name="Proc. Natl. Acad. Sci. U.S.A.">
        <title>The human olfactory receptor gene family.</title>
        <authorList>
            <person name="Malnic B."/>
            <person name="Godfrey P.A."/>
            <person name="Buck L.B."/>
        </authorList>
    </citation>
    <scope>IDENTIFICATION</scope>
</reference>
<reference key="3">
    <citation type="journal article" date="2004" name="Proc. Natl. Acad. Sci. U.S.A.">
        <authorList>
            <person name="Malnic B."/>
            <person name="Godfrey P.A."/>
            <person name="Buck L.B."/>
        </authorList>
    </citation>
    <scope>ERRATUM OF PUBMED:14983052</scope>
</reference>
<proteinExistence type="inferred from homology"/>
<sequence length="314" mass="35258">MENKTEVTQFILLGLTNDSELQVPLFITFPFIYIITLVGNLGIIVLIFWDSCLHNPMYFFLSNLSLVDFCYSSAVTPIVMAGFLIEDKVISYNACAAQMYIFVAFATVENYLLASMAYDRYAAVCKPLHYTTTMTTTVCARLAIGSYLCGFLNASIHTGDTFSLSFCKSNEVHHFFCDIPAVMVLSCSDRHISELVLIYVVSFNIFIALLVILISYTFIFITILKMHSASVYQKPLSTCASHFIAVGIFYGTIIFMYLQPSSSHSMDTDKMAPVFYTMVIPMLNPLVYSLRNKEVKSAFKKVVEKAKLSVGWSV</sequence>
<accession>Q8NH48</accession>
<accession>Q6IEV6</accession>
<keyword id="KW-1003">Cell membrane</keyword>
<keyword id="KW-1015">Disulfide bond</keyword>
<keyword id="KW-0297">G-protein coupled receptor</keyword>
<keyword id="KW-0325">Glycoprotein</keyword>
<keyword id="KW-0472">Membrane</keyword>
<keyword id="KW-0552">Olfaction</keyword>
<keyword id="KW-0675">Receptor</keyword>
<keyword id="KW-1185">Reference proteome</keyword>
<keyword id="KW-0716">Sensory transduction</keyword>
<keyword id="KW-0807">Transducer</keyword>
<keyword id="KW-0812">Transmembrane</keyword>
<keyword id="KW-1133">Transmembrane helix</keyword>
<evidence type="ECO:0000255" key="1"/>
<evidence type="ECO:0000255" key="2">
    <source>
        <dbReference type="PROSITE-ProRule" id="PRU00521"/>
    </source>
</evidence>
<evidence type="ECO:0000305" key="3"/>